<comment type="function">
    <text evidence="1">Cell wall formation. Catalyzes the transfer of a GlcNAc subunit on undecaprenyl-pyrophosphoryl-MurNAc-pentapeptide (lipid intermediate I) to form undecaprenyl-pyrophosphoryl-MurNAc-(pentapeptide)GlcNAc (lipid intermediate II).</text>
</comment>
<comment type="catalytic activity">
    <reaction evidence="1">
        <text>di-trans,octa-cis-undecaprenyl diphospho-N-acetyl-alpha-D-muramoyl-L-alanyl-D-glutamyl-meso-2,6-diaminopimeloyl-D-alanyl-D-alanine + UDP-N-acetyl-alpha-D-glucosamine = di-trans,octa-cis-undecaprenyl diphospho-[N-acetyl-alpha-D-glucosaminyl-(1-&gt;4)]-N-acetyl-alpha-D-muramoyl-L-alanyl-D-glutamyl-meso-2,6-diaminopimeloyl-D-alanyl-D-alanine + UDP + H(+)</text>
        <dbReference type="Rhea" id="RHEA:31227"/>
        <dbReference type="ChEBI" id="CHEBI:15378"/>
        <dbReference type="ChEBI" id="CHEBI:57705"/>
        <dbReference type="ChEBI" id="CHEBI:58223"/>
        <dbReference type="ChEBI" id="CHEBI:61387"/>
        <dbReference type="ChEBI" id="CHEBI:61388"/>
        <dbReference type="EC" id="2.4.1.227"/>
    </reaction>
</comment>
<comment type="pathway">
    <text evidence="1">Cell wall biogenesis; peptidoglycan biosynthesis.</text>
</comment>
<comment type="subcellular location">
    <subcellularLocation>
        <location evidence="1">Cell inner membrane</location>
        <topology evidence="1">Peripheral membrane protein</topology>
        <orientation evidence="1">Cytoplasmic side</orientation>
    </subcellularLocation>
</comment>
<comment type="similarity">
    <text evidence="1">Belongs to the glycosyltransferase 28 family. MurG subfamily.</text>
</comment>
<dbReference type="EC" id="2.4.1.227" evidence="1"/>
<dbReference type="EMBL" id="CP000462">
    <property type="protein sequence ID" value="ABK39586.1"/>
    <property type="molecule type" value="Genomic_DNA"/>
</dbReference>
<dbReference type="RefSeq" id="WP_011707580.1">
    <property type="nucleotide sequence ID" value="NC_008570.1"/>
</dbReference>
<dbReference type="RefSeq" id="YP_858323.1">
    <property type="nucleotide sequence ID" value="NC_008570.1"/>
</dbReference>
<dbReference type="SMR" id="A0KPX2"/>
<dbReference type="STRING" id="380703.AHA_3884"/>
<dbReference type="CAZy" id="GT28">
    <property type="family name" value="Glycosyltransferase Family 28"/>
</dbReference>
<dbReference type="EnsemblBacteria" id="ABK39586">
    <property type="protein sequence ID" value="ABK39586"/>
    <property type="gene ID" value="AHA_3884"/>
</dbReference>
<dbReference type="GeneID" id="4490854"/>
<dbReference type="KEGG" id="aha:AHA_3884"/>
<dbReference type="PATRIC" id="fig|380703.7.peg.3854"/>
<dbReference type="eggNOG" id="COG0707">
    <property type="taxonomic scope" value="Bacteria"/>
</dbReference>
<dbReference type="HOGENOM" id="CLU_037404_2_0_6"/>
<dbReference type="OrthoDB" id="9808936at2"/>
<dbReference type="UniPathway" id="UPA00219"/>
<dbReference type="Proteomes" id="UP000000756">
    <property type="component" value="Chromosome"/>
</dbReference>
<dbReference type="GO" id="GO:0005886">
    <property type="term" value="C:plasma membrane"/>
    <property type="evidence" value="ECO:0007669"/>
    <property type="project" value="UniProtKB-SubCell"/>
</dbReference>
<dbReference type="GO" id="GO:0051991">
    <property type="term" value="F:UDP-N-acetyl-D-glucosamine:N-acetylmuramoyl-L-alanyl-D-glutamyl-meso-2,6-diaminopimelyl-D-alanyl-D-alanine-diphosphoundecaprenol 4-beta-N-acetylglucosaminlytransferase activity"/>
    <property type="evidence" value="ECO:0007669"/>
    <property type="project" value="RHEA"/>
</dbReference>
<dbReference type="GO" id="GO:0050511">
    <property type="term" value="F:undecaprenyldiphospho-muramoylpentapeptide beta-N-acetylglucosaminyltransferase activity"/>
    <property type="evidence" value="ECO:0007669"/>
    <property type="project" value="UniProtKB-UniRule"/>
</dbReference>
<dbReference type="GO" id="GO:0005975">
    <property type="term" value="P:carbohydrate metabolic process"/>
    <property type="evidence" value="ECO:0007669"/>
    <property type="project" value="InterPro"/>
</dbReference>
<dbReference type="GO" id="GO:0051301">
    <property type="term" value="P:cell division"/>
    <property type="evidence" value="ECO:0007669"/>
    <property type="project" value="UniProtKB-KW"/>
</dbReference>
<dbReference type="GO" id="GO:0071555">
    <property type="term" value="P:cell wall organization"/>
    <property type="evidence" value="ECO:0007669"/>
    <property type="project" value="UniProtKB-KW"/>
</dbReference>
<dbReference type="GO" id="GO:0030259">
    <property type="term" value="P:lipid glycosylation"/>
    <property type="evidence" value="ECO:0007669"/>
    <property type="project" value="UniProtKB-UniRule"/>
</dbReference>
<dbReference type="GO" id="GO:0009252">
    <property type="term" value="P:peptidoglycan biosynthetic process"/>
    <property type="evidence" value="ECO:0007669"/>
    <property type="project" value="UniProtKB-UniRule"/>
</dbReference>
<dbReference type="GO" id="GO:0008360">
    <property type="term" value="P:regulation of cell shape"/>
    <property type="evidence" value="ECO:0007669"/>
    <property type="project" value="UniProtKB-KW"/>
</dbReference>
<dbReference type="CDD" id="cd03785">
    <property type="entry name" value="GT28_MurG"/>
    <property type="match status" value="1"/>
</dbReference>
<dbReference type="Gene3D" id="3.40.50.2000">
    <property type="entry name" value="Glycogen Phosphorylase B"/>
    <property type="match status" value="2"/>
</dbReference>
<dbReference type="HAMAP" id="MF_00033">
    <property type="entry name" value="MurG"/>
    <property type="match status" value="1"/>
</dbReference>
<dbReference type="InterPro" id="IPR006009">
    <property type="entry name" value="GlcNAc_MurG"/>
</dbReference>
<dbReference type="InterPro" id="IPR007235">
    <property type="entry name" value="Glyco_trans_28_C"/>
</dbReference>
<dbReference type="InterPro" id="IPR004276">
    <property type="entry name" value="GlycoTrans_28_N"/>
</dbReference>
<dbReference type="NCBIfam" id="TIGR01133">
    <property type="entry name" value="murG"/>
    <property type="match status" value="1"/>
</dbReference>
<dbReference type="PANTHER" id="PTHR21015:SF22">
    <property type="entry name" value="GLYCOSYLTRANSFERASE"/>
    <property type="match status" value="1"/>
</dbReference>
<dbReference type="PANTHER" id="PTHR21015">
    <property type="entry name" value="UDP-N-ACETYLGLUCOSAMINE--N-ACETYLMURAMYL-(PENTAPEPTIDE) PYROPHOSPHORYL-UNDECAPRENOL N-ACETYLGLUCOSAMINE TRANSFERASE 1"/>
    <property type="match status" value="1"/>
</dbReference>
<dbReference type="Pfam" id="PF04101">
    <property type="entry name" value="Glyco_tran_28_C"/>
    <property type="match status" value="1"/>
</dbReference>
<dbReference type="Pfam" id="PF03033">
    <property type="entry name" value="Glyco_transf_28"/>
    <property type="match status" value="1"/>
</dbReference>
<dbReference type="SUPFAM" id="SSF53756">
    <property type="entry name" value="UDP-Glycosyltransferase/glycogen phosphorylase"/>
    <property type="match status" value="1"/>
</dbReference>
<name>MURG_AERHH</name>
<accession>A0KPX2</accession>
<protein>
    <recommendedName>
        <fullName evidence="1">UDP-N-acetylglucosamine--N-acetylmuramyl-(pentapeptide) pyrophosphoryl-undecaprenol N-acetylglucosamine transferase</fullName>
        <ecNumber evidence="1">2.4.1.227</ecNumber>
    </recommendedName>
    <alternativeName>
        <fullName evidence="1">Undecaprenyl-PP-MurNAc-pentapeptide-UDPGlcNAc GlcNAc transferase</fullName>
    </alternativeName>
</protein>
<gene>
    <name evidence="1" type="primary">murG</name>
    <name type="ordered locus">AHA_3884</name>
</gene>
<keyword id="KW-0131">Cell cycle</keyword>
<keyword id="KW-0132">Cell division</keyword>
<keyword id="KW-0997">Cell inner membrane</keyword>
<keyword id="KW-1003">Cell membrane</keyword>
<keyword id="KW-0133">Cell shape</keyword>
<keyword id="KW-0961">Cell wall biogenesis/degradation</keyword>
<keyword id="KW-0328">Glycosyltransferase</keyword>
<keyword id="KW-0472">Membrane</keyword>
<keyword id="KW-0573">Peptidoglycan synthesis</keyword>
<keyword id="KW-1185">Reference proteome</keyword>
<keyword id="KW-0808">Transferase</keyword>
<sequence>MSKTLLVMAGGTGGHVFPGLAVADRLKAQGWTIHWLGTADRMEAELVPAHGYPISFIDIQGVRGNGIKRLLVAPYRIVKSVLQARRVLKTIRPDVVLGMGGFASGPGGVAAWLSGIPLLLHEQNAAAGLTNKLLARLAKRVLMAFPGAFAPSRRTAVVGNPVRPEVVALPDPQLRSGAEPLRLLIVGGSLGARVLNEQVPPAVAAAGVPIEVRHQCGKGNRDAVAEAYAKQGVAAEVSEFIKDMAGAYAWADLVVCRAGALTVSEVAAAGVAAIFVPLPHAVDDHQTRNALTLVDGGAAEFLPQSELTTASLAARLSWLAGRRETLLNMAQAARRVAITDAAERVADECKRLATGQIEREL</sequence>
<organism>
    <name type="scientific">Aeromonas hydrophila subsp. hydrophila (strain ATCC 7966 / DSM 30187 / BCRC 13018 / CCUG 14551 / JCM 1027 / KCTC 2358 / NCIMB 9240 / NCTC 8049)</name>
    <dbReference type="NCBI Taxonomy" id="380703"/>
    <lineage>
        <taxon>Bacteria</taxon>
        <taxon>Pseudomonadati</taxon>
        <taxon>Pseudomonadota</taxon>
        <taxon>Gammaproteobacteria</taxon>
        <taxon>Aeromonadales</taxon>
        <taxon>Aeromonadaceae</taxon>
        <taxon>Aeromonas</taxon>
    </lineage>
</organism>
<feature type="chain" id="PRO_0000315061" description="UDP-N-acetylglucosamine--N-acetylmuramyl-(pentapeptide) pyrophosphoryl-undecaprenol N-acetylglucosamine transferase">
    <location>
        <begin position="1"/>
        <end position="361"/>
    </location>
</feature>
<feature type="binding site" evidence="1">
    <location>
        <begin position="12"/>
        <end position="14"/>
    </location>
    <ligand>
        <name>UDP-N-acetyl-alpha-D-glucosamine</name>
        <dbReference type="ChEBI" id="CHEBI:57705"/>
    </ligand>
</feature>
<feature type="binding site" evidence="1">
    <location>
        <position position="124"/>
    </location>
    <ligand>
        <name>UDP-N-acetyl-alpha-D-glucosamine</name>
        <dbReference type="ChEBI" id="CHEBI:57705"/>
    </ligand>
</feature>
<feature type="binding site" evidence="1">
    <location>
        <position position="163"/>
    </location>
    <ligand>
        <name>UDP-N-acetyl-alpha-D-glucosamine</name>
        <dbReference type="ChEBI" id="CHEBI:57705"/>
    </ligand>
</feature>
<feature type="binding site" evidence="1">
    <location>
        <position position="189"/>
    </location>
    <ligand>
        <name>UDP-N-acetyl-alpha-D-glucosamine</name>
        <dbReference type="ChEBI" id="CHEBI:57705"/>
    </ligand>
</feature>
<feature type="binding site" evidence="1">
    <location>
        <position position="241"/>
    </location>
    <ligand>
        <name>UDP-N-acetyl-alpha-D-glucosamine</name>
        <dbReference type="ChEBI" id="CHEBI:57705"/>
    </ligand>
</feature>
<feature type="binding site" evidence="1">
    <location>
        <begin position="260"/>
        <end position="265"/>
    </location>
    <ligand>
        <name>UDP-N-acetyl-alpha-D-glucosamine</name>
        <dbReference type="ChEBI" id="CHEBI:57705"/>
    </ligand>
</feature>
<feature type="binding site" evidence="1">
    <location>
        <position position="286"/>
    </location>
    <ligand>
        <name>UDP-N-acetyl-alpha-D-glucosamine</name>
        <dbReference type="ChEBI" id="CHEBI:57705"/>
    </ligand>
</feature>
<evidence type="ECO:0000255" key="1">
    <source>
        <dbReference type="HAMAP-Rule" id="MF_00033"/>
    </source>
</evidence>
<reference key="1">
    <citation type="journal article" date="2006" name="J. Bacteriol.">
        <title>Genome sequence of Aeromonas hydrophila ATCC 7966T: jack of all trades.</title>
        <authorList>
            <person name="Seshadri R."/>
            <person name="Joseph S.W."/>
            <person name="Chopra A.K."/>
            <person name="Sha J."/>
            <person name="Shaw J."/>
            <person name="Graf J."/>
            <person name="Haft D.H."/>
            <person name="Wu M."/>
            <person name="Ren Q."/>
            <person name="Rosovitz M.J."/>
            <person name="Madupu R."/>
            <person name="Tallon L."/>
            <person name="Kim M."/>
            <person name="Jin S."/>
            <person name="Vuong H."/>
            <person name="Stine O.C."/>
            <person name="Ali A."/>
            <person name="Horneman A.J."/>
            <person name="Heidelberg J.F."/>
        </authorList>
    </citation>
    <scope>NUCLEOTIDE SEQUENCE [LARGE SCALE GENOMIC DNA]</scope>
    <source>
        <strain>ATCC 7966 / DSM 30187 / BCRC 13018 / CCUG 14551 / JCM 1027 / KCTC 2358 / NCIMB 9240 / NCTC 8049</strain>
    </source>
</reference>
<proteinExistence type="inferred from homology"/>